<protein>
    <recommendedName>
        <fullName evidence="19">Actin-histidine N-methyltransferase</fullName>
        <ecNumber evidence="6 7 9 11">2.1.1.85</ecNumber>
    </recommendedName>
    <alternativeName>
        <fullName evidence="19">Protein-L-histidine N-tele-methyltransferase</fullName>
    </alternativeName>
    <alternativeName>
        <fullName evidence="19">SET domain-containing protein 3</fullName>
        <shortName evidence="15">hSETD3</shortName>
    </alternativeName>
</protein>
<gene>
    <name evidence="16 17 20" type="primary">SETD3</name>
    <name evidence="20" type="synonym">C14orf154</name>
</gene>
<name>SETD3_HUMAN</name>
<comment type="function">
    <text evidence="6 7 8 9 11">Protein-histidine N-methyltransferase that specifically mediates 3-methylhistidine (tele-methylhistidine) methylation of actin at 'His-73' (PubMed:30526847, PubMed:30626964, PubMed:30785395, PubMed:31388018, PubMed:31993215). Histidine methylation of actin is required for smooth muscle contraction of the laboring uterus during delivery (PubMed:30626964). Does not have protein-lysine N-methyltransferase activity and probably only catalyzes histidine methylation of actin (PubMed:30626964, PubMed:30785395, PubMed:31388018).</text>
</comment>
<comment type="catalytic activity">
    <reaction evidence="6 7 8 9 11">
        <text>L-histidyl-[protein] + S-adenosyl-L-methionine = N(tele)-methyl-L-histidyl-[protein] + S-adenosyl-L-homocysteine + H(+)</text>
        <dbReference type="Rhea" id="RHEA:19369"/>
        <dbReference type="Rhea" id="RHEA-COMP:9745"/>
        <dbReference type="Rhea" id="RHEA-COMP:11600"/>
        <dbReference type="ChEBI" id="CHEBI:15378"/>
        <dbReference type="ChEBI" id="CHEBI:16367"/>
        <dbReference type="ChEBI" id="CHEBI:29979"/>
        <dbReference type="ChEBI" id="CHEBI:57856"/>
        <dbReference type="ChEBI" id="CHEBI:59789"/>
        <dbReference type="EC" id="2.1.1.85"/>
    </reaction>
    <physiologicalReaction direction="left-to-right" evidence="6 7 8 9 11">
        <dbReference type="Rhea" id="RHEA:19370"/>
    </physiologicalReaction>
</comment>
<comment type="biophysicochemical properties">
    <kinetics>
        <KM evidence="6">0.752 uM for beta-actin</KM>
        <KM evidence="8">0.502 uM for beta-actin</KM>
        <KM evidence="6">0.116 uM for S-adenosyl-L-methionine</KM>
        <KM evidence="8">0.111 uM for S-adenosyl-L-methionine</KM>
        <Vmax evidence="6">9.091 nmol/min/mg enzyme with beta-actin as substrate</Vmax>
        <Vmax evidence="8">13.55 nmol/min/mg enzyme with beta-actin as substrate</Vmax>
        <Vmax evidence="6">8.649 nmol/min/mg enzyme with S-adenosyl-L-methionine as substrate</Vmax>
        <Vmax evidence="8">11.26 nmol/min/mg enzyme with S-adenosyl-L-methionine as substrate</Vmax>
        <text evidence="6 8">kcat is 0.65 min(-1) with beta-actin as substrate (PubMed:30526847). kcat is 0.809 min(-1) with beta-actin as substrate (PubMed:30785395). kcat is 0.61 min(-1) with S-adenosyl-L-methionine as substrate (PubMed:30526847). kcat is 0.673 min(-1) with S-adenosyl-L-methionine as substrate (PubMed:30785395).</text>
    </kinetics>
</comment>
<comment type="subunit">
    <text evidence="1">Interacts with MYOD1.</text>
</comment>
<comment type="interaction">
    <interactant intactId="EBI-2908049">
        <id>Q86TU7</id>
    </interactant>
    <interactant intactId="EBI-358311">
        <id>P12004</id>
        <label>PCNA</label>
    </interactant>
    <organismsDiffer>false</organismsDiffer>
    <experiments>3</experiments>
</comment>
<comment type="subcellular location">
    <subcellularLocation>
        <location evidence="5 7">Cytoplasm</location>
    </subcellularLocation>
    <subcellularLocation>
        <location evidence="5">Nucleus</location>
    </subcellularLocation>
    <text evidence="5">Localizes mainly in the cytoplasm.</text>
</comment>
<comment type="alternative products">
    <event type="alternative splicing"/>
    <isoform>
        <id>Q86TU7-1</id>
        <name>1</name>
        <sequence type="displayed"/>
    </isoform>
    <isoform>
        <id>Q86TU7-2</id>
        <name>2</name>
        <sequence type="described" ref="VSP_021190 VSP_021193"/>
    </isoform>
    <isoform>
        <id>Q86TU7-3</id>
        <name>3</name>
        <sequence type="described" ref="VSP_021191 VSP_021192"/>
    </isoform>
</comment>
<comment type="developmental stage">
    <text evidence="5">Protein levels peak in S phase and are lowest during M phase (at protein level).</text>
</comment>
<comment type="domain">
    <text evidence="7">The SET domain specifically recognizes and binds actin, suggesting that it does not accommodate substrates diverging from actin.</text>
</comment>
<comment type="PTM">
    <text evidence="5">Phosphorylated by GSK3B, which is required for recognition by the SCF(FBXW7) complex and subsequent degradation.</text>
</comment>
<comment type="PTM">
    <text evidence="5">Ubiquitinated by the SCF(FBXW7) complex following phosphorylation by GSK3B, leading to its degradation by the proteasome.</text>
</comment>
<comment type="miscellaneous">
    <text evidence="12">Shows protein-methionine methyltransferase activity in vitro on an actin mutant with a Met instead of a His residue at position 73.</text>
</comment>
<comment type="similarity">
    <text evidence="3">Belongs to the class V-like SAM-binding methyltransferase superfamily. SETD3 actin-histidine methyltransferase family.</text>
</comment>
<comment type="caution">
    <text evidence="1 6 7">Was initially reported to have histone methyltransferase activity and methylate 'Lys-4' and 'Lys-36' of histone H3 (H3K4me and H3K36me) (By similarity). However, this conclusion was based on mass spectrometry data wherin mass shifts were inconsistent with a bona fide methylation event (PubMed:30626964). In vitro, the protein-lysine methyltransferase activity is weak compared to the protein-histidine methyltransferase activity (PubMed:30526847).</text>
</comment>
<comment type="sequence caution" evidence="19">
    <conflict type="frameshift">
        <sequence resource="EMBL-CDS" id="BAB15525"/>
    </conflict>
</comment>
<comment type="online information" name="Protein Spotlight">
    <link uri="https://www.proteinspotlight.org/back_issues/215/"/>
    <text>On versatility - Issue 215 of June 2019</text>
</comment>
<accession>Q86TU7</accession>
<accession>A0PJU3</accession>
<accession>A5PLP0</accession>
<accession>B4DZE8</accession>
<accession>Q0VAQ2</accession>
<accession>Q659C0</accession>
<accession>Q86TU8</accession>
<accession>Q96GY9</accession>
<accession>Q9H5U5</accession>
<feature type="chain" id="PRO_0000254175" description="Actin-histidine N-methyltransferase">
    <location>
        <begin position="1"/>
        <end position="594"/>
    </location>
</feature>
<feature type="domain" description="SET" evidence="2">
    <location>
        <begin position="94"/>
        <end position="314"/>
    </location>
</feature>
<feature type="region of interest" description="Disordered" evidence="4">
    <location>
        <begin position="1"/>
        <end position="22"/>
    </location>
</feature>
<feature type="region of interest" description="Disordered" evidence="4">
    <location>
        <begin position="549"/>
        <end position="594"/>
    </location>
</feature>
<feature type="compositionally biased region" description="Polar residues" evidence="4">
    <location>
        <begin position="10"/>
        <end position="20"/>
    </location>
</feature>
<feature type="compositionally biased region" description="Polar residues" evidence="4">
    <location>
        <begin position="555"/>
        <end position="572"/>
    </location>
</feature>
<feature type="compositionally biased region" description="Basic and acidic residues" evidence="4">
    <location>
        <begin position="573"/>
        <end position="582"/>
    </location>
</feature>
<feature type="compositionally biased region" description="Polar residues" evidence="4">
    <location>
        <begin position="583"/>
        <end position="594"/>
    </location>
</feature>
<feature type="binding site" evidence="7 8 9 10 11 12 13 21 22 23 24 25 26 27 28 29 30 31 32 33 34 35 36 37">
    <location>
        <position position="75"/>
    </location>
    <ligand>
        <name>S-adenosyl-L-methionine</name>
        <dbReference type="ChEBI" id="CHEBI:59789"/>
    </ligand>
</feature>
<feature type="binding site" evidence="7 8 9 10 11 12 13 21 22 23 24 25 26 27 28 29 30 31 32 33 34 35 36 37">
    <location>
        <begin position="104"/>
        <end position="106"/>
    </location>
    <ligand>
        <name>S-adenosyl-L-methionine</name>
        <dbReference type="ChEBI" id="CHEBI:59789"/>
    </ligand>
</feature>
<feature type="binding site" evidence="7 8 9 10 11 12 13 21 22 23 24 25 26 27 28 29 30 31 32 33 34 35 36 37">
    <location>
        <position position="254"/>
    </location>
    <ligand>
        <name>S-adenosyl-L-methionine</name>
        <dbReference type="ChEBI" id="CHEBI:59789"/>
    </ligand>
</feature>
<feature type="binding site" evidence="7 8 9 10 11 12 13 21 22 23 24 25 26 27 28 29 30 31 32 33 34 35 36 37">
    <location>
        <begin position="275"/>
        <end position="279"/>
    </location>
    <ligand>
        <name>S-adenosyl-L-methionine</name>
        <dbReference type="ChEBI" id="CHEBI:59789"/>
    </ligand>
</feature>
<feature type="binding site" evidence="7 8 9 10 11 12 13 21 22 23 24 25 26 27 28 29 30 31 32 33 34 35 36 37">
    <location>
        <begin position="325"/>
        <end position="327"/>
    </location>
    <ligand>
        <name>S-adenosyl-L-methionine</name>
        <dbReference type="ChEBI" id="CHEBI:59789"/>
    </ligand>
</feature>
<feature type="modified residue" description="Phosphoserine" evidence="38 39">
    <location>
        <position position="513"/>
    </location>
</feature>
<feature type="splice variant" id="VSP_021190" description="In isoform 2." evidence="14 18">
    <original>ITTGYNLEDDRCE</original>
    <variation>TPEDSFALAVASA</variation>
    <location>
        <begin position="284"/>
        <end position="296"/>
    </location>
</feature>
<feature type="splice variant" id="VSP_021191" description="In isoform 3." evidence="14">
    <original>I</original>
    <variation>V</variation>
    <location>
        <position position="284"/>
    </location>
</feature>
<feature type="splice variant" id="VSP_021192" description="In isoform 3." evidence="14">
    <location>
        <begin position="285"/>
        <end position="594"/>
    </location>
</feature>
<feature type="splice variant" id="VSP_021193" description="In isoform 2." evidence="14 18">
    <location>
        <begin position="297"/>
        <end position="594"/>
    </location>
</feature>
<feature type="sequence variant" id="VAR_028830" description="In dbSNP:rs1740231.">
    <original>N</original>
    <variation>D</variation>
    <location>
        <position position="278"/>
    </location>
</feature>
<feature type="mutagenesis site" description="Does not affect ubiquitination and degradation by the SCF(FBXW7) complex." evidence="5">
    <original>SSPAPG</original>
    <variation>ASPAPA</variation>
    <location>
        <begin position="37"/>
        <end position="42"/>
    </location>
</feature>
<feature type="mutagenesis site" description="Decreased ubiquitination and degradation by the SCF(FBXW7) complex." evidence="5">
    <original>SEYDT</original>
    <variation>AEYDA</variation>
    <location>
        <begin position="181"/>
        <end position="185"/>
    </location>
</feature>
<feature type="mutagenesis site" description="Decreased binding to actin and decreased protein-histidine N-methyltransferase activity." evidence="8">
    <original>R</original>
    <variation>A</variation>
    <location>
        <position position="215"/>
    </location>
</feature>
<feature type="mutagenesis site" description="Decreased binding to actin and decreased protein-histidine N-methyltransferase activity. Increased protein-lysine methyltransferase activity toward an actin mutant with a Lys instead of a His target residue. Increased protein-methionine methyltransferase activity toward an actin mutant with a Met instead of a His target residue." evidence="8 9 12">
    <original>N</original>
    <variation>A</variation>
    <variation>V</variation>
    <location>
        <position position="256"/>
    </location>
</feature>
<feature type="mutagenesis site" description="Shows protein-lysine methyltransferase activity toward an actin mutant with a Lys instead of a His target residue; when associated with A-274." evidence="10">
    <original>N</original>
    <variation>F</variation>
    <location>
        <position position="256"/>
    </location>
</feature>
<feature type="mutagenesis site" description="Does not affect ubiquitination and degradation by the SCF(FBXW7) complex." evidence="5">
    <original>TEDGS</original>
    <variation>AEDGA</variation>
    <location>
        <begin position="260"/>
        <end position="264"/>
    </location>
</feature>
<feature type="mutagenesis site" description="Shows protein-lysine methyltransferase activity toward an actin mutant with a Lys instead of a His target residue; when associated with F-256." evidence="10">
    <original>W</original>
    <variation>A</variation>
    <location>
        <position position="274"/>
    </location>
</feature>
<feature type="mutagenesis site" description="Abolished protein-histidine N-methyltransferase activity." evidence="7">
    <original>Y</original>
    <variation>A</variation>
    <location>
        <position position="313"/>
    </location>
</feature>
<feature type="mutagenesis site" description="Strongly decreased binding to actin and decreased protein-histidine N-methyltransferase activity." evidence="8">
    <original>Y</original>
    <variation>F</variation>
    <location>
        <position position="313"/>
    </location>
</feature>
<feature type="mutagenesis site" description="Decreased binding to actin and decreased protein-histidine N-methyltransferase activity." evidence="8">
    <original>R</original>
    <variation>A</variation>
    <location>
        <position position="316"/>
    </location>
</feature>
<feature type="mutagenesis site" description="Strongly decreased ubiquitination and degradation by the SCF(FBXW7) complex." evidence="5">
    <original>TEPPIS</original>
    <variation>AEPPIA</variation>
    <location>
        <begin position="373"/>
        <end position="378"/>
    </location>
</feature>
<feature type="mutagenesis site" description="Does not affect ubiquitination and degradation by the SCF(FBXW7) complex." evidence="5">
    <original>SSVGDS</original>
    <variation>ASVGDA</variation>
    <location>
        <begin position="512"/>
        <end position="517"/>
    </location>
</feature>
<feature type="mutagenesis site" description="Does not affect ubiquitination and degradation by the SCF(FBXW7) complex." evidence="5">
    <original>SENES</original>
    <variation>AENEA</variation>
    <location>
        <begin position="565"/>
        <end position="569"/>
    </location>
</feature>
<feature type="sequence conflict" description="In Ref. 5; AAI42996." evidence="19" ref="5">
    <original>E</original>
    <variation>K</variation>
    <location>
        <position position="415"/>
    </location>
</feature>
<feature type="helix" evidence="41">
    <location>
        <begin position="22"/>
        <end position="36"/>
    </location>
</feature>
<feature type="helix" evidence="41">
    <location>
        <begin position="43"/>
        <end position="45"/>
    </location>
</feature>
<feature type="helix" evidence="41">
    <location>
        <begin position="46"/>
        <end position="62"/>
    </location>
</feature>
<feature type="strand" evidence="43">
    <location>
        <begin position="66"/>
        <end position="68"/>
    </location>
</feature>
<feature type="helix" evidence="41">
    <location>
        <begin position="75"/>
        <end position="78"/>
    </location>
</feature>
<feature type="helix" evidence="41">
    <location>
        <begin position="79"/>
        <end position="88"/>
    </location>
</feature>
<feature type="strand" evidence="41">
    <location>
        <begin position="94"/>
        <end position="101"/>
    </location>
</feature>
<feature type="turn" evidence="41">
    <location>
        <begin position="102"/>
        <end position="104"/>
    </location>
</feature>
<feature type="strand" evidence="41">
    <location>
        <begin position="105"/>
        <end position="112"/>
    </location>
</feature>
<feature type="strand" evidence="41">
    <location>
        <begin position="119"/>
        <end position="124"/>
    </location>
</feature>
<feature type="helix" evidence="41">
    <location>
        <begin position="125"/>
        <end position="127"/>
    </location>
</feature>
<feature type="strand" evidence="40">
    <location>
        <begin position="128"/>
        <end position="130"/>
    </location>
</feature>
<feature type="helix" evidence="41">
    <location>
        <begin position="131"/>
        <end position="135"/>
    </location>
</feature>
<feature type="helix" evidence="41">
    <location>
        <begin position="140"/>
        <end position="143"/>
    </location>
</feature>
<feature type="helix" evidence="41">
    <location>
        <begin position="147"/>
        <end position="151"/>
    </location>
</feature>
<feature type="helix" evidence="41">
    <location>
        <begin position="153"/>
        <end position="165"/>
    </location>
</feature>
<feature type="helix" evidence="41">
    <location>
        <begin position="173"/>
        <end position="176"/>
    </location>
</feature>
<feature type="helix" evidence="41">
    <location>
        <begin position="186"/>
        <end position="188"/>
    </location>
</feature>
<feature type="helix" evidence="41">
    <location>
        <begin position="191"/>
        <end position="195"/>
    </location>
</feature>
<feature type="turn" evidence="41">
    <location>
        <begin position="196"/>
        <end position="199"/>
    </location>
</feature>
<feature type="helix" evidence="41">
    <location>
        <begin position="203"/>
        <end position="226"/>
    </location>
</feature>
<feature type="helix" evidence="41">
    <location>
        <begin position="228"/>
        <end position="230"/>
    </location>
</feature>
<feature type="helix" evidence="42">
    <location>
        <begin position="234"/>
        <end position="236"/>
    </location>
</feature>
<feature type="helix" evidence="41">
    <location>
        <begin position="241"/>
        <end position="254"/>
    </location>
</feature>
<feature type="strand" evidence="41">
    <location>
        <begin position="256"/>
        <end position="259"/>
    </location>
</feature>
<feature type="strand" evidence="41">
    <location>
        <begin position="263"/>
        <end position="270"/>
    </location>
</feature>
<feature type="helix" evidence="41">
    <location>
        <begin position="274"/>
        <end position="276"/>
    </location>
</feature>
<feature type="strand" evidence="44">
    <location>
        <begin position="277"/>
        <end position="279"/>
    </location>
</feature>
<feature type="strand" evidence="41">
    <location>
        <begin position="286"/>
        <end position="289"/>
    </location>
</feature>
<feature type="turn" evidence="41">
    <location>
        <begin position="290"/>
        <end position="293"/>
    </location>
</feature>
<feature type="strand" evidence="41">
    <location>
        <begin position="294"/>
        <end position="298"/>
    </location>
</feature>
<feature type="strand" evidence="41">
    <location>
        <begin position="307"/>
        <end position="311"/>
    </location>
</feature>
<feature type="helix" evidence="41">
    <location>
        <begin position="318"/>
        <end position="325"/>
    </location>
</feature>
<feature type="strand" evidence="41">
    <location>
        <begin position="336"/>
        <end position="342"/>
    </location>
</feature>
<feature type="helix" evidence="41">
    <location>
        <begin position="350"/>
        <end position="359"/>
    </location>
</feature>
<feature type="strand" evidence="41">
    <location>
        <begin position="364"/>
        <end position="377"/>
    </location>
</feature>
<feature type="helix" evidence="41">
    <location>
        <begin position="379"/>
        <end position="388"/>
    </location>
</feature>
<feature type="helix" evidence="41">
    <location>
        <begin position="392"/>
        <end position="399"/>
    </location>
</feature>
<feature type="strand" evidence="40">
    <location>
        <begin position="400"/>
        <end position="403"/>
    </location>
</feature>
<feature type="helix" evidence="41">
    <location>
        <begin position="404"/>
        <end position="409"/>
    </location>
</feature>
<feature type="turn" evidence="41">
    <location>
        <begin position="410"/>
        <end position="412"/>
    </location>
</feature>
<feature type="helix" evidence="41">
    <location>
        <begin position="420"/>
        <end position="438"/>
    </location>
</feature>
<feature type="strand" evidence="41">
    <location>
        <begin position="441"/>
        <end position="443"/>
    </location>
</feature>
<feature type="helix" evidence="41">
    <location>
        <begin position="445"/>
        <end position="454"/>
    </location>
</feature>
<feature type="helix" evidence="41">
    <location>
        <begin position="459"/>
        <end position="495"/>
    </location>
</feature>
<evidence type="ECO:0000250" key="1">
    <source>
        <dbReference type="UniProtKB" id="Q91WC0"/>
    </source>
</evidence>
<evidence type="ECO:0000255" key="2">
    <source>
        <dbReference type="PROSITE-ProRule" id="PRU00190"/>
    </source>
</evidence>
<evidence type="ECO:0000255" key="3">
    <source>
        <dbReference type="PROSITE-ProRule" id="PRU00898"/>
    </source>
</evidence>
<evidence type="ECO:0000256" key="4">
    <source>
        <dbReference type="SAM" id="MobiDB-lite"/>
    </source>
</evidence>
<evidence type="ECO:0000269" key="5">
    <source>
    </source>
</evidence>
<evidence type="ECO:0000269" key="6">
    <source>
    </source>
</evidence>
<evidence type="ECO:0000269" key="7">
    <source>
    </source>
</evidence>
<evidence type="ECO:0000269" key="8">
    <source>
    </source>
</evidence>
<evidence type="ECO:0000269" key="9">
    <source>
    </source>
</evidence>
<evidence type="ECO:0000269" key="10">
    <source>
    </source>
</evidence>
<evidence type="ECO:0000269" key="11">
    <source>
    </source>
</evidence>
<evidence type="ECO:0000269" key="12">
    <source>
    </source>
</evidence>
<evidence type="ECO:0000269" key="13">
    <source ref="12"/>
</evidence>
<evidence type="ECO:0000303" key="14">
    <source>
    </source>
</evidence>
<evidence type="ECO:0000303" key="15">
    <source>
    </source>
</evidence>
<evidence type="ECO:0000303" key="16">
    <source>
    </source>
</evidence>
<evidence type="ECO:0000303" key="17">
    <source>
    </source>
</evidence>
<evidence type="ECO:0000303" key="18">
    <source ref="1"/>
</evidence>
<evidence type="ECO:0000305" key="19"/>
<evidence type="ECO:0000312" key="20">
    <source>
        <dbReference type="HGNC" id="HGNC:20493"/>
    </source>
</evidence>
<evidence type="ECO:0007744" key="21">
    <source>
        <dbReference type="PDB" id="3SMT"/>
    </source>
</evidence>
<evidence type="ECO:0007744" key="22">
    <source>
        <dbReference type="PDB" id="6ICT"/>
    </source>
</evidence>
<evidence type="ECO:0007744" key="23">
    <source>
        <dbReference type="PDB" id="6ICV"/>
    </source>
</evidence>
<evidence type="ECO:0007744" key="24">
    <source>
        <dbReference type="PDB" id="6JAT"/>
    </source>
</evidence>
<evidence type="ECO:0007744" key="25">
    <source>
        <dbReference type="PDB" id="6MBJ"/>
    </source>
</evidence>
<evidence type="ECO:0007744" key="26">
    <source>
        <dbReference type="PDB" id="6MBK"/>
    </source>
</evidence>
<evidence type="ECO:0007744" key="27">
    <source>
        <dbReference type="PDB" id="6MBL"/>
    </source>
</evidence>
<evidence type="ECO:0007744" key="28">
    <source>
        <dbReference type="PDB" id="6OX0"/>
    </source>
</evidence>
<evidence type="ECO:0007744" key="29">
    <source>
        <dbReference type="PDB" id="6OX1"/>
    </source>
</evidence>
<evidence type="ECO:0007744" key="30">
    <source>
        <dbReference type="PDB" id="6OX2"/>
    </source>
</evidence>
<evidence type="ECO:0007744" key="31">
    <source>
        <dbReference type="PDB" id="6OX3"/>
    </source>
</evidence>
<evidence type="ECO:0007744" key="32">
    <source>
        <dbReference type="PDB" id="6OX4"/>
    </source>
</evidence>
<evidence type="ECO:0007744" key="33">
    <source>
        <dbReference type="PDB" id="6OX5"/>
    </source>
</evidence>
<evidence type="ECO:0007744" key="34">
    <source>
        <dbReference type="PDB" id="6V62"/>
    </source>
</evidence>
<evidence type="ECO:0007744" key="35">
    <source>
        <dbReference type="PDB" id="6V63"/>
    </source>
</evidence>
<evidence type="ECO:0007744" key="36">
    <source>
        <dbReference type="PDB" id="6WK1"/>
    </source>
</evidence>
<evidence type="ECO:0007744" key="37">
    <source>
        <dbReference type="PDB" id="6WK2"/>
    </source>
</evidence>
<evidence type="ECO:0007744" key="38">
    <source>
    </source>
</evidence>
<evidence type="ECO:0007744" key="39">
    <source>
    </source>
</evidence>
<evidence type="ECO:0007829" key="40">
    <source>
        <dbReference type="PDB" id="6JAT"/>
    </source>
</evidence>
<evidence type="ECO:0007829" key="41">
    <source>
        <dbReference type="PDB" id="6MBK"/>
    </source>
</evidence>
<evidence type="ECO:0007829" key="42">
    <source>
        <dbReference type="PDB" id="6OX0"/>
    </source>
</evidence>
<evidence type="ECO:0007829" key="43">
    <source>
        <dbReference type="PDB" id="6OX1"/>
    </source>
</evidence>
<evidence type="ECO:0007829" key="44">
    <source>
        <dbReference type="PDB" id="6V62"/>
    </source>
</evidence>
<dbReference type="EC" id="2.1.1.85" evidence="6 7 9 11"/>
<dbReference type="EMBL" id="BX161441">
    <property type="protein sequence ID" value="CAD61911.1"/>
    <property type="molecule type" value="mRNA"/>
</dbReference>
<dbReference type="EMBL" id="BX161471">
    <property type="protein sequence ID" value="CAD61927.1"/>
    <property type="molecule type" value="mRNA"/>
</dbReference>
<dbReference type="EMBL" id="AK026680">
    <property type="protein sequence ID" value="BAB15525.1"/>
    <property type="status" value="ALT_FRAME"/>
    <property type="molecule type" value="mRNA"/>
</dbReference>
<dbReference type="EMBL" id="AK302882">
    <property type="protein sequence ID" value="BAG64060.1"/>
    <property type="molecule type" value="mRNA"/>
</dbReference>
<dbReference type="EMBL" id="AL110504">
    <property type="status" value="NOT_ANNOTATED_CDS"/>
    <property type="molecule type" value="Genomic_DNA"/>
</dbReference>
<dbReference type="EMBL" id="AL132819">
    <property type="status" value="NOT_ANNOTATED_CDS"/>
    <property type="molecule type" value="Genomic_DNA"/>
</dbReference>
<dbReference type="EMBL" id="CH471061">
    <property type="protein sequence ID" value="EAW81664.1"/>
    <property type="molecule type" value="Genomic_DNA"/>
</dbReference>
<dbReference type="EMBL" id="CH471061">
    <property type="protein sequence ID" value="EAW81665.1"/>
    <property type="molecule type" value="Genomic_DNA"/>
</dbReference>
<dbReference type="EMBL" id="BC009054">
    <property type="protein sequence ID" value="AAH09054.2"/>
    <property type="molecule type" value="mRNA"/>
</dbReference>
<dbReference type="EMBL" id="BC120967">
    <property type="protein sequence ID" value="AAI20968.1"/>
    <property type="molecule type" value="mRNA"/>
</dbReference>
<dbReference type="EMBL" id="BC120968">
    <property type="protein sequence ID" value="AAI20969.1"/>
    <property type="molecule type" value="mRNA"/>
</dbReference>
<dbReference type="EMBL" id="BC127624">
    <property type="protein sequence ID" value="AAI27625.1"/>
    <property type="molecule type" value="mRNA"/>
</dbReference>
<dbReference type="EMBL" id="BC127625">
    <property type="protein sequence ID" value="AAI27626.1"/>
    <property type="molecule type" value="mRNA"/>
</dbReference>
<dbReference type="EMBL" id="BC142995">
    <property type="protein sequence ID" value="AAI42996.1"/>
    <property type="molecule type" value="mRNA"/>
</dbReference>
<dbReference type="EMBL" id="BC148251">
    <property type="protein sequence ID" value="AAI48252.1"/>
    <property type="molecule type" value="mRNA"/>
</dbReference>
<dbReference type="EMBL" id="AL359581">
    <property type="protein sequence ID" value="CAH56365.1"/>
    <property type="molecule type" value="mRNA"/>
</dbReference>
<dbReference type="CCDS" id="CCDS9951.1">
    <molecule id="Q86TU7-1"/>
</dbReference>
<dbReference type="CCDS" id="CCDS9952.1">
    <molecule id="Q86TU7-2"/>
</dbReference>
<dbReference type="PIR" id="T50614">
    <property type="entry name" value="T50614"/>
</dbReference>
<dbReference type="RefSeq" id="NP_115609.2">
    <molecule id="Q86TU7-1"/>
    <property type="nucleotide sequence ID" value="NM_032233.2"/>
</dbReference>
<dbReference type="RefSeq" id="NP_954574.1">
    <molecule id="Q86TU7-2"/>
    <property type="nucleotide sequence ID" value="NM_199123.2"/>
</dbReference>
<dbReference type="RefSeq" id="XP_011535533.2">
    <molecule id="Q86TU7-1"/>
    <property type="nucleotide sequence ID" value="XM_011537231.3"/>
</dbReference>
<dbReference type="RefSeq" id="XP_011535534.1">
    <molecule id="Q86TU7-1"/>
    <property type="nucleotide sequence ID" value="XM_011537232.4"/>
</dbReference>
<dbReference type="RefSeq" id="XP_011535537.1">
    <molecule id="Q86TU7-2"/>
    <property type="nucleotide sequence ID" value="XM_011537235.1"/>
</dbReference>
<dbReference type="RefSeq" id="XP_016877188.1">
    <molecule id="Q86TU7-1"/>
    <property type="nucleotide sequence ID" value="XM_017021699.2"/>
</dbReference>
<dbReference type="RefSeq" id="XP_016877189.1">
    <molecule id="Q86TU7-1"/>
    <property type="nucleotide sequence ID" value="XM_017021700.2"/>
</dbReference>
<dbReference type="RefSeq" id="XP_047287761.1">
    <molecule id="Q86TU7-1"/>
    <property type="nucleotide sequence ID" value="XM_047431805.1"/>
</dbReference>
<dbReference type="RefSeq" id="XP_054232780.1">
    <molecule id="Q86TU7-1"/>
    <property type="nucleotide sequence ID" value="XM_054376805.1"/>
</dbReference>
<dbReference type="RefSeq" id="XP_054232781.1">
    <molecule id="Q86TU7-1"/>
    <property type="nucleotide sequence ID" value="XM_054376806.1"/>
</dbReference>
<dbReference type="RefSeq" id="XP_054232783.1">
    <molecule id="Q86TU7-2"/>
    <property type="nucleotide sequence ID" value="XM_054376808.1"/>
</dbReference>
<dbReference type="PDB" id="3SMT">
    <property type="method" value="X-ray"/>
    <property type="resolution" value="2.04 A"/>
    <property type="chains" value="A=2-498"/>
</dbReference>
<dbReference type="PDB" id="6ICT">
    <property type="method" value="X-ray"/>
    <property type="resolution" value="1.95 A"/>
    <property type="chains" value="A/B/C/D=1-503"/>
</dbReference>
<dbReference type="PDB" id="6ICV">
    <property type="method" value="X-ray"/>
    <property type="resolution" value="2.15 A"/>
    <property type="chains" value="A/B=1-503"/>
</dbReference>
<dbReference type="PDB" id="6JAT">
    <property type="method" value="X-ray"/>
    <property type="resolution" value="2.71 A"/>
    <property type="chains" value="A/C=1-498"/>
</dbReference>
<dbReference type="PDB" id="6MBJ">
    <property type="method" value="X-ray"/>
    <property type="resolution" value="1.78 A"/>
    <property type="chains" value="A/B=21-500, A/B=1-594"/>
</dbReference>
<dbReference type="PDB" id="6MBK">
    <property type="method" value="X-ray"/>
    <property type="resolution" value="1.69 A"/>
    <property type="chains" value="A/B=21-503, A/B=1-594"/>
</dbReference>
<dbReference type="PDB" id="6MBL">
    <property type="method" value="X-ray"/>
    <property type="resolution" value="2.20 A"/>
    <property type="chains" value="A=21-500, A=1-594"/>
</dbReference>
<dbReference type="PDB" id="6OX0">
    <property type="method" value="X-ray"/>
    <property type="resolution" value="1.75 A"/>
    <property type="chains" value="A/B=1-594"/>
</dbReference>
<dbReference type="PDB" id="6OX1">
    <property type="method" value="X-ray"/>
    <property type="resolution" value="1.95 A"/>
    <property type="chains" value="A/B=1-594"/>
</dbReference>
<dbReference type="PDB" id="6OX2">
    <property type="method" value="X-ray"/>
    <property type="resolution" value="2.09 A"/>
    <property type="chains" value="A/B=1-594"/>
</dbReference>
<dbReference type="PDB" id="6OX3">
    <property type="method" value="X-ray"/>
    <property type="resolution" value="1.78 A"/>
    <property type="chains" value="A/B=1-594"/>
</dbReference>
<dbReference type="PDB" id="6OX4">
    <property type="method" value="X-ray"/>
    <property type="resolution" value="2.29 A"/>
    <property type="chains" value="A/B=1-594"/>
</dbReference>
<dbReference type="PDB" id="6OX5">
    <property type="method" value="X-ray"/>
    <property type="resolution" value="2.10 A"/>
    <property type="chains" value="A=1-594"/>
</dbReference>
<dbReference type="PDB" id="6V62">
    <property type="method" value="X-ray"/>
    <property type="resolution" value="2.36 A"/>
    <property type="chains" value="A=1-594"/>
</dbReference>
<dbReference type="PDB" id="6V63">
    <property type="method" value="X-ray"/>
    <property type="resolution" value="2.02 A"/>
    <property type="chains" value="A/B=1-594"/>
</dbReference>
<dbReference type="PDB" id="6WK1">
    <property type="method" value="X-ray"/>
    <property type="resolution" value="1.89 A"/>
    <property type="chains" value="A/B=1-594"/>
</dbReference>
<dbReference type="PDB" id="6WK2">
    <property type="method" value="X-ray"/>
    <property type="resolution" value="1.76 A"/>
    <property type="chains" value="A/D=1-594"/>
</dbReference>
<dbReference type="PDB" id="7LMS">
    <property type="method" value="EM"/>
    <property type="resolution" value="3.50 A"/>
    <property type="chains" value="A=2-594"/>
</dbReference>
<dbReference type="PDB" id="7W28">
    <property type="method" value="X-ray"/>
    <property type="resolution" value="1.79 A"/>
    <property type="chains" value="A=1-498"/>
</dbReference>
<dbReference type="PDB" id="7W29">
    <property type="method" value="X-ray"/>
    <property type="resolution" value="2.90 A"/>
    <property type="chains" value="A=1-498"/>
</dbReference>
<dbReference type="PDB" id="8X77">
    <property type="method" value="X-ray"/>
    <property type="resolution" value="3.52 A"/>
    <property type="chains" value="A/B/D/G=1-594"/>
</dbReference>
<dbReference type="PDB" id="8X8Q">
    <property type="method" value="EM"/>
    <property type="resolution" value="3.14 A"/>
    <property type="chains" value="B=1-594"/>
</dbReference>
<dbReference type="PDBsum" id="3SMT"/>
<dbReference type="PDBsum" id="6ICT"/>
<dbReference type="PDBsum" id="6ICV"/>
<dbReference type="PDBsum" id="6JAT"/>
<dbReference type="PDBsum" id="6MBJ"/>
<dbReference type="PDBsum" id="6MBK"/>
<dbReference type="PDBsum" id="6MBL"/>
<dbReference type="PDBsum" id="6OX0"/>
<dbReference type="PDBsum" id="6OX1"/>
<dbReference type="PDBsum" id="6OX2"/>
<dbReference type="PDBsum" id="6OX3"/>
<dbReference type="PDBsum" id="6OX4"/>
<dbReference type="PDBsum" id="6OX5"/>
<dbReference type="PDBsum" id="6V62"/>
<dbReference type="PDBsum" id="6V63"/>
<dbReference type="PDBsum" id="6WK1"/>
<dbReference type="PDBsum" id="6WK2"/>
<dbReference type="PDBsum" id="7LMS"/>
<dbReference type="PDBsum" id="7W28"/>
<dbReference type="PDBsum" id="7W29"/>
<dbReference type="PDBsum" id="8X77"/>
<dbReference type="PDBsum" id="8X8Q"/>
<dbReference type="EMDB" id="EMD-23441"/>
<dbReference type="EMDB" id="EMD-38156"/>
<dbReference type="SMR" id="Q86TU7"/>
<dbReference type="BioGRID" id="123940">
    <property type="interactions" value="38"/>
</dbReference>
<dbReference type="FunCoup" id="Q86TU7">
    <property type="interactions" value="3208"/>
</dbReference>
<dbReference type="IntAct" id="Q86TU7">
    <property type="interactions" value="9"/>
</dbReference>
<dbReference type="MINT" id="Q86TU7"/>
<dbReference type="STRING" id="9606.ENSP00000327436"/>
<dbReference type="GlyGen" id="Q86TU7">
    <property type="glycosylation" value="1 site, 1 O-linked glycan (1 site)"/>
</dbReference>
<dbReference type="iPTMnet" id="Q86TU7"/>
<dbReference type="PhosphoSitePlus" id="Q86TU7"/>
<dbReference type="BioMuta" id="SETD3"/>
<dbReference type="DMDM" id="74750394"/>
<dbReference type="jPOST" id="Q86TU7"/>
<dbReference type="MassIVE" id="Q86TU7"/>
<dbReference type="PaxDb" id="9606-ENSP00000327436"/>
<dbReference type="PeptideAtlas" id="Q86TU7"/>
<dbReference type="ProteomicsDB" id="69732">
    <molecule id="Q86TU7-1"/>
</dbReference>
<dbReference type="ProteomicsDB" id="69733">
    <molecule id="Q86TU7-2"/>
</dbReference>
<dbReference type="ProteomicsDB" id="69734">
    <molecule id="Q86TU7-3"/>
</dbReference>
<dbReference type="Pumba" id="Q86TU7"/>
<dbReference type="ABCD" id="Q86TU7">
    <property type="antibodies" value="1 sequenced antibody"/>
</dbReference>
<dbReference type="Antibodypedia" id="147">
    <property type="antibodies" value="168 antibodies from 25 providers"/>
</dbReference>
<dbReference type="DNASU" id="84193"/>
<dbReference type="Ensembl" id="ENST00000329331.7">
    <molecule id="Q86TU7-2"/>
    <property type="protein sequence ID" value="ENSP00000327910.3"/>
    <property type="gene ID" value="ENSG00000183576.13"/>
</dbReference>
<dbReference type="Ensembl" id="ENST00000331768.10">
    <molecule id="Q86TU7-1"/>
    <property type="protein sequence ID" value="ENSP00000327436.5"/>
    <property type="gene ID" value="ENSG00000183576.13"/>
</dbReference>
<dbReference type="GeneID" id="84193"/>
<dbReference type="KEGG" id="hsa:84193"/>
<dbReference type="MANE-Select" id="ENST00000331768.10">
    <property type="protein sequence ID" value="ENSP00000327436.5"/>
    <property type="RefSeq nucleotide sequence ID" value="NM_032233.3"/>
    <property type="RefSeq protein sequence ID" value="NP_115609.2"/>
</dbReference>
<dbReference type="UCSC" id="uc001ygc.4">
    <molecule id="Q86TU7-1"/>
    <property type="organism name" value="human"/>
</dbReference>
<dbReference type="AGR" id="HGNC:20493"/>
<dbReference type="CTD" id="84193"/>
<dbReference type="DisGeNET" id="84193"/>
<dbReference type="GeneCards" id="SETD3"/>
<dbReference type="HGNC" id="HGNC:20493">
    <property type="gene designation" value="SETD3"/>
</dbReference>
<dbReference type="HPA" id="ENSG00000183576">
    <property type="expression patterns" value="Low tissue specificity"/>
</dbReference>
<dbReference type="MIM" id="615671">
    <property type="type" value="gene"/>
</dbReference>
<dbReference type="neXtProt" id="NX_Q86TU7"/>
<dbReference type="OpenTargets" id="ENSG00000183576"/>
<dbReference type="PharmGKB" id="PA134883013"/>
<dbReference type="VEuPathDB" id="HostDB:ENSG00000183576"/>
<dbReference type="eggNOG" id="KOG1337">
    <property type="taxonomic scope" value="Eukaryota"/>
</dbReference>
<dbReference type="GeneTree" id="ENSGT00940000153577"/>
<dbReference type="HOGENOM" id="CLU_028272_0_0_1"/>
<dbReference type="InParanoid" id="Q86TU7"/>
<dbReference type="OMA" id="QHIDGIF"/>
<dbReference type="OrthoDB" id="441812at2759"/>
<dbReference type="PAN-GO" id="Q86TU7">
    <property type="GO annotations" value="6 GO annotations based on evolutionary models"/>
</dbReference>
<dbReference type="PhylomeDB" id="Q86TU7"/>
<dbReference type="TreeFam" id="TF354226"/>
<dbReference type="BRENDA" id="2.1.1.85">
    <property type="organism ID" value="2681"/>
</dbReference>
<dbReference type="PathwayCommons" id="Q86TU7"/>
<dbReference type="Reactome" id="R-HSA-3214841">
    <property type="pathway name" value="PKMTs methylate histone lysines"/>
</dbReference>
<dbReference type="SignaLink" id="Q86TU7"/>
<dbReference type="BioGRID-ORCS" id="84193">
    <property type="hits" value="13 hits in 1158 CRISPR screens"/>
</dbReference>
<dbReference type="ChiTaRS" id="SETD3">
    <property type="organism name" value="human"/>
</dbReference>
<dbReference type="EvolutionaryTrace" id="Q86TU7"/>
<dbReference type="GenomeRNAi" id="84193"/>
<dbReference type="Pharos" id="Q86TU7">
    <property type="development level" value="Tbio"/>
</dbReference>
<dbReference type="PRO" id="PR:Q86TU7"/>
<dbReference type="Proteomes" id="UP000005640">
    <property type="component" value="Chromosome 14"/>
</dbReference>
<dbReference type="RNAct" id="Q86TU7">
    <property type="molecule type" value="protein"/>
</dbReference>
<dbReference type="Bgee" id="ENSG00000183576">
    <property type="expression patterns" value="Expressed in calcaneal tendon and 219 other cell types or tissues"/>
</dbReference>
<dbReference type="ExpressionAtlas" id="Q86TU7">
    <property type="expression patterns" value="baseline and differential"/>
</dbReference>
<dbReference type="GO" id="GO:0000785">
    <property type="term" value="C:chromatin"/>
    <property type="evidence" value="ECO:0007669"/>
    <property type="project" value="Ensembl"/>
</dbReference>
<dbReference type="GO" id="GO:0005737">
    <property type="term" value="C:cytoplasm"/>
    <property type="evidence" value="ECO:0000314"/>
    <property type="project" value="UniProtKB"/>
</dbReference>
<dbReference type="GO" id="GO:0005654">
    <property type="term" value="C:nucleoplasm"/>
    <property type="evidence" value="ECO:0000304"/>
    <property type="project" value="Reactome"/>
</dbReference>
<dbReference type="GO" id="GO:0003779">
    <property type="term" value="F:actin binding"/>
    <property type="evidence" value="ECO:0007669"/>
    <property type="project" value="UniProtKB-KW"/>
</dbReference>
<dbReference type="GO" id="GO:0046975">
    <property type="term" value="F:histone H3K36 methyltransferase activity"/>
    <property type="evidence" value="ECO:0000250"/>
    <property type="project" value="UniProtKB"/>
</dbReference>
<dbReference type="GO" id="GO:0042800">
    <property type="term" value="F:histone H3K4 methyltransferase activity"/>
    <property type="evidence" value="ECO:0000318"/>
    <property type="project" value="GO_Central"/>
</dbReference>
<dbReference type="GO" id="GO:0018064">
    <property type="term" value="F:protein-L-histidine N-tele-methyltransferase activity"/>
    <property type="evidence" value="ECO:0000314"/>
    <property type="project" value="UniProtKB"/>
</dbReference>
<dbReference type="GO" id="GO:0061629">
    <property type="term" value="F:RNA polymerase II-specific DNA-binding transcription factor binding"/>
    <property type="evidence" value="ECO:0007669"/>
    <property type="project" value="Ensembl"/>
</dbReference>
<dbReference type="GO" id="GO:0003713">
    <property type="term" value="F:transcription coactivator activity"/>
    <property type="evidence" value="ECO:0000250"/>
    <property type="project" value="UniProtKB"/>
</dbReference>
<dbReference type="GO" id="GO:0030047">
    <property type="term" value="P:actin modification"/>
    <property type="evidence" value="ECO:0000314"/>
    <property type="project" value="UniProtKB"/>
</dbReference>
<dbReference type="GO" id="GO:0018021">
    <property type="term" value="P:peptidyl-histidine methylation"/>
    <property type="evidence" value="ECO:0000314"/>
    <property type="project" value="UniProtKB"/>
</dbReference>
<dbReference type="GO" id="GO:0045893">
    <property type="term" value="P:positive regulation of DNA-templated transcription"/>
    <property type="evidence" value="ECO:0000250"/>
    <property type="project" value="UniProtKB"/>
</dbReference>
<dbReference type="GO" id="GO:0051149">
    <property type="term" value="P:positive regulation of muscle cell differentiation"/>
    <property type="evidence" value="ECO:0007669"/>
    <property type="project" value="Ensembl"/>
</dbReference>
<dbReference type="GO" id="GO:0045944">
    <property type="term" value="P:positive regulation of transcription by RNA polymerase II"/>
    <property type="evidence" value="ECO:0000318"/>
    <property type="project" value="GO_Central"/>
</dbReference>
<dbReference type="GO" id="GO:0070472">
    <property type="term" value="P:regulation of uterine smooth muscle contraction"/>
    <property type="evidence" value="ECO:0000250"/>
    <property type="project" value="UniProtKB"/>
</dbReference>
<dbReference type="CDD" id="cd19176">
    <property type="entry name" value="SET_SETD3"/>
    <property type="match status" value="1"/>
</dbReference>
<dbReference type="FunFam" id="3.90.1410.10:FF:000001">
    <property type="entry name" value="histone-lysine N-methyltransferase setd3 isoform X1"/>
    <property type="match status" value="1"/>
</dbReference>
<dbReference type="FunFam" id="3.90.1420.10:FF:000001">
    <property type="entry name" value="histone-lysine N-methyltransferase setd3 isoform X1"/>
    <property type="match status" value="1"/>
</dbReference>
<dbReference type="Gene3D" id="3.90.1420.10">
    <property type="entry name" value="Rubisco LSMT, substrate-binding domain"/>
    <property type="match status" value="1"/>
</dbReference>
<dbReference type="Gene3D" id="3.90.1410.10">
    <property type="entry name" value="set domain protein methyltransferase, domain 1"/>
    <property type="match status" value="1"/>
</dbReference>
<dbReference type="InterPro" id="IPR015353">
    <property type="entry name" value="Rubisco_LSMT_subst-bd"/>
</dbReference>
<dbReference type="InterPro" id="IPR036464">
    <property type="entry name" value="Rubisco_LSMT_subst-bd_sf"/>
</dbReference>
<dbReference type="InterPro" id="IPR001214">
    <property type="entry name" value="SET_dom"/>
</dbReference>
<dbReference type="InterPro" id="IPR046341">
    <property type="entry name" value="SET_dom_sf"/>
</dbReference>
<dbReference type="InterPro" id="IPR025785">
    <property type="entry name" value="SETD3"/>
</dbReference>
<dbReference type="InterPro" id="IPR044428">
    <property type="entry name" value="SETD3_SET"/>
</dbReference>
<dbReference type="InterPro" id="IPR050600">
    <property type="entry name" value="SETD3_SETD6_MTase"/>
</dbReference>
<dbReference type="PANTHER" id="PTHR13271:SF47">
    <property type="entry name" value="ACTIN-HISTIDINE N-METHYLTRANSFERASE"/>
    <property type="match status" value="1"/>
</dbReference>
<dbReference type="PANTHER" id="PTHR13271">
    <property type="entry name" value="UNCHARACTERIZED PUTATIVE METHYLTRANSFERASE"/>
    <property type="match status" value="1"/>
</dbReference>
<dbReference type="Pfam" id="PF09273">
    <property type="entry name" value="Rubis-subs-bind"/>
    <property type="match status" value="1"/>
</dbReference>
<dbReference type="Pfam" id="PF00856">
    <property type="entry name" value="SET"/>
    <property type="match status" value="1"/>
</dbReference>
<dbReference type="SUPFAM" id="SSF81822">
    <property type="entry name" value="RuBisCo LSMT C-terminal, substrate-binding domain"/>
    <property type="match status" value="1"/>
</dbReference>
<dbReference type="SUPFAM" id="SSF82199">
    <property type="entry name" value="SET domain"/>
    <property type="match status" value="1"/>
</dbReference>
<dbReference type="PROSITE" id="PS51565">
    <property type="entry name" value="SAM_MT85_SETD3"/>
    <property type="match status" value="1"/>
</dbReference>
<dbReference type="PROSITE" id="PS50280">
    <property type="entry name" value="SET"/>
    <property type="match status" value="1"/>
</dbReference>
<organism>
    <name type="scientific">Homo sapiens</name>
    <name type="common">Human</name>
    <dbReference type="NCBI Taxonomy" id="9606"/>
    <lineage>
        <taxon>Eukaryota</taxon>
        <taxon>Metazoa</taxon>
        <taxon>Chordata</taxon>
        <taxon>Craniata</taxon>
        <taxon>Vertebrata</taxon>
        <taxon>Euteleostomi</taxon>
        <taxon>Mammalia</taxon>
        <taxon>Eutheria</taxon>
        <taxon>Euarchontoglires</taxon>
        <taxon>Primates</taxon>
        <taxon>Haplorrhini</taxon>
        <taxon>Catarrhini</taxon>
        <taxon>Hominidae</taxon>
        <taxon>Homo</taxon>
    </lineage>
</organism>
<keyword id="KW-0002">3D-structure</keyword>
<keyword id="KW-0009">Actin-binding</keyword>
<keyword id="KW-0025">Alternative splicing</keyword>
<keyword id="KW-0963">Cytoplasm</keyword>
<keyword id="KW-0489">Methyltransferase</keyword>
<keyword id="KW-0539">Nucleus</keyword>
<keyword id="KW-0597">Phosphoprotein</keyword>
<keyword id="KW-1267">Proteomics identification</keyword>
<keyword id="KW-1185">Reference proteome</keyword>
<keyword id="KW-0949">S-adenosyl-L-methionine</keyword>
<keyword id="KW-0808">Transferase</keyword>
<keyword id="KW-0832">Ubl conjugation</keyword>
<sequence length="594" mass="67257">MGKKSRVKTQKSGTGATATVSPKEILNLTSELLQKCSSPAPGPGKEWEEYVQIRTLVEKIRKKQKGLSVTFDGKREDYFPDLMKWASENGASVEGFEMVNFKEEGFGLRATRDIKAEELFLWVPRKLLMTVESAKNSVLGPLYSQDRILQAMGNIALAFHLLCERASPNSFWQPYIQTLPSEYDTPLYFEEDEVRYLQSTQAIHDVFSQYKNTARQYAYFYKVIQTHPHANKLPLKDSFTYEDYRWAVSSVMTRQNQIPTEDGSRVTLALIPLWDMCNHTNGLITTGYNLEDDRCECVALQDFRAGEQIYIFYGTRSNAEFVIHSGFFFDNNSHDRVKIKLGVSKSDRLYAMKAEVLARAGIPTSSVFALHFTEPPISAQLLAFLRVFCMTEEELKEHLLGDSAIDRIFTLGNSEFPVSWDNEVKLWTFLEDRASLLLKTYKTTIEEDKSVLKNHDLSVRAKMAIKLRLGEKEILEKAVKSAAVNREYYRQQMEEKAPLPKYEESNLGLLESSVGDSRLPLVLRNLEEEAGVQDALNIREAISKAKATENGLVNGENSIPNGTRSENESLNQESKRAVEDAKGSSSDSTAGVKE</sequence>
<reference key="1">
    <citation type="submission" date="2003-01" db="EMBL/GenBank/DDBJ databases">
        <title>Full-length cDNA libraries and normalization.</title>
        <authorList>
            <person name="Li W.B."/>
            <person name="Gruber C."/>
            <person name="Jessee J."/>
            <person name="Polayes D."/>
        </authorList>
    </citation>
    <scope>NUCLEOTIDE SEQUENCE [LARGE SCALE MRNA] (ISOFORMS 1 AND 2)</scope>
    <source>
        <tissue>Placenta</tissue>
    </source>
</reference>
<reference key="2">
    <citation type="journal article" date="2004" name="Nat. Genet.">
        <title>Complete sequencing and characterization of 21,243 full-length human cDNAs.</title>
        <authorList>
            <person name="Ota T."/>
            <person name="Suzuki Y."/>
            <person name="Nishikawa T."/>
            <person name="Otsuki T."/>
            <person name="Sugiyama T."/>
            <person name="Irie R."/>
            <person name="Wakamatsu A."/>
            <person name="Hayashi K."/>
            <person name="Sato H."/>
            <person name="Nagai K."/>
            <person name="Kimura K."/>
            <person name="Makita H."/>
            <person name="Sekine M."/>
            <person name="Obayashi M."/>
            <person name="Nishi T."/>
            <person name="Shibahara T."/>
            <person name="Tanaka T."/>
            <person name="Ishii S."/>
            <person name="Yamamoto J."/>
            <person name="Saito K."/>
            <person name="Kawai Y."/>
            <person name="Isono Y."/>
            <person name="Nakamura Y."/>
            <person name="Nagahari K."/>
            <person name="Murakami K."/>
            <person name="Yasuda T."/>
            <person name="Iwayanagi T."/>
            <person name="Wagatsuma M."/>
            <person name="Shiratori A."/>
            <person name="Sudo H."/>
            <person name="Hosoiri T."/>
            <person name="Kaku Y."/>
            <person name="Kodaira H."/>
            <person name="Kondo H."/>
            <person name="Sugawara M."/>
            <person name="Takahashi M."/>
            <person name="Kanda K."/>
            <person name="Yokoi T."/>
            <person name="Furuya T."/>
            <person name="Kikkawa E."/>
            <person name="Omura Y."/>
            <person name="Abe K."/>
            <person name="Kamihara K."/>
            <person name="Katsuta N."/>
            <person name="Sato K."/>
            <person name="Tanikawa M."/>
            <person name="Yamazaki M."/>
            <person name="Ninomiya K."/>
            <person name="Ishibashi T."/>
            <person name="Yamashita H."/>
            <person name="Murakawa K."/>
            <person name="Fujimori K."/>
            <person name="Tanai H."/>
            <person name="Kimata M."/>
            <person name="Watanabe M."/>
            <person name="Hiraoka S."/>
            <person name="Chiba Y."/>
            <person name="Ishida S."/>
            <person name="Ono Y."/>
            <person name="Takiguchi S."/>
            <person name="Watanabe S."/>
            <person name="Yosida M."/>
            <person name="Hotuta T."/>
            <person name="Kusano J."/>
            <person name="Kanehori K."/>
            <person name="Takahashi-Fujii A."/>
            <person name="Hara H."/>
            <person name="Tanase T.-O."/>
            <person name="Nomura Y."/>
            <person name="Togiya S."/>
            <person name="Komai F."/>
            <person name="Hara R."/>
            <person name="Takeuchi K."/>
            <person name="Arita M."/>
            <person name="Imose N."/>
            <person name="Musashino K."/>
            <person name="Yuuki H."/>
            <person name="Oshima A."/>
            <person name="Sasaki N."/>
            <person name="Aotsuka S."/>
            <person name="Yoshikawa Y."/>
            <person name="Matsunawa H."/>
            <person name="Ichihara T."/>
            <person name="Shiohata N."/>
            <person name="Sano S."/>
            <person name="Moriya S."/>
            <person name="Momiyama H."/>
            <person name="Satoh N."/>
            <person name="Takami S."/>
            <person name="Terashima Y."/>
            <person name="Suzuki O."/>
            <person name="Nakagawa S."/>
            <person name="Senoh A."/>
            <person name="Mizoguchi H."/>
            <person name="Goto Y."/>
            <person name="Shimizu F."/>
            <person name="Wakebe H."/>
            <person name="Hishigaki H."/>
            <person name="Watanabe T."/>
            <person name="Sugiyama A."/>
            <person name="Takemoto M."/>
            <person name="Kawakami B."/>
            <person name="Yamazaki M."/>
            <person name="Watanabe K."/>
            <person name="Kumagai A."/>
            <person name="Itakura S."/>
            <person name="Fukuzumi Y."/>
            <person name="Fujimori Y."/>
            <person name="Komiyama M."/>
            <person name="Tashiro H."/>
            <person name="Tanigami A."/>
            <person name="Fujiwara T."/>
            <person name="Ono T."/>
            <person name="Yamada K."/>
            <person name="Fujii Y."/>
            <person name="Ozaki K."/>
            <person name="Hirao M."/>
            <person name="Ohmori Y."/>
            <person name="Kawabata A."/>
            <person name="Hikiji T."/>
            <person name="Kobatake N."/>
            <person name="Inagaki H."/>
            <person name="Ikema Y."/>
            <person name="Okamoto S."/>
            <person name="Okitani R."/>
            <person name="Kawakami T."/>
            <person name="Noguchi S."/>
            <person name="Itoh T."/>
            <person name="Shigeta K."/>
            <person name="Senba T."/>
            <person name="Matsumura K."/>
            <person name="Nakajima Y."/>
            <person name="Mizuno T."/>
            <person name="Morinaga M."/>
            <person name="Sasaki M."/>
            <person name="Togashi T."/>
            <person name="Oyama M."/>
            <person name="Hata H."/>
            <person name="Watanabe M."/>
            <person name="Komatsu T."/>
            <person name="Mizushima-Sugano J."/>
            <person name="Satoh T."/>
            <person name="Shirai Y."/>
            <person name="Takahashi Y."/>
            <person name="Nakagawa K."/>
            <person name="Okumura K."/>
            <person name="Nagase T."/>
            <person name="Nomura N."/>
            <person name="Kikuchi H."/>
            <person name="Masuho Y."/>
            <person name="Yamashita R."/>
            <person name="Nakai K."/>
            <person name="Yada T."/>
            <person name="Nakamura Y."/>
            <person name="Ohara O."/>
            <person name="Isogai T."/>
            <person name="Sugano S."/>
        </authorList>
    </citation>
    <scope>NUCLEOTIDE SEQUENCE [LARGE SCALE MRNA] (ISOFORM 1)</scope>
    <source>
        <tissue>Lung</tissue>
        <tissue>Testis</tissue>
    </source>
</reference>
<reference key="3">
    <citation type="journal article" date="2003" name="Nature">
        <title>The DNA sequence and analysis of human chromosome 14.</title>
        <authorList>
            <person name="Heilig R."/>
            <person name="Eckenberg R."/>
            <person name="Petit J.-L."/>
            <person name="Fonknechten N."/>
            <person name="Da Silva C."/>
            <person name="Cattolico L."/>
            <person name="Levy M."/>
            <person name="Barbe V."/>
            <person name="De Berardinis V."/>
            <person name="Ureta-Vidal A."/>
            <person name="Pelletier E."/>
            <person name="Vico V."/>
            <person name="Anthouard V."/>
            <person name="Rowen L."/>
            <person name="Madan A."/>
            <person name="Qin S."/>
            <person name="Sun H."/>
            <person name="Du H."/>
            <person name="Pepin K."/>
            <person name="Artiguenave F."/>
            <person name="Robert C."/>
            <person name="Cruaud C."/>
            <person name="Bruels T."/>
            <person name="Jaillon O."/>
            <person name="Friedlander L."/>
            <person name="Samson G."/>
            <person name="Brottier P."/>
            <person name="Cure S."/>
            <person name="Segurens B."/>
            <person name="Aniere F."/>
            <person name="Samain S."/>
            <person name="Crespeau H."/>
            <person name="Abbasi N."/>
            <person name="Aiach N."/>
            <person name="Boscus D."/>
            <person name="Dickhoff R."/>
            <person name="Dors M."/>
            <person name="Dubois I."/>
            <person name="Friedman C."/>
            <person name="Gouyvenoux M."/>
            <person name="James R."/>
            <person name="Madan A."/>
            <person name="Mairey-Estrada B."/>
            <person name="Mangenot S."/>
            <person name="Martins N."/>
            <person name="Menard M."/>
            <person name="Oztas S."/>
            <person name="Ratcliffe A."/>
            <person name="Shaffer T."/>
            <person name="Trask B."/>
            <person name="Vacherie B."/>
            <person name="Bellemere C."/>
            <person name="Belser C."/>
            <person name="Besnard-Gonnet M."/>
            <person name="Bartol-Mavel D."/>
            <person name="Boutard M."/>
            <person name="Briez-Silla S."/>
            <person name="Combette S."/>
            <person name="Dufosse-Laurent V."/>
            <person name="Ferron C."/>
            <person name="Lechaplais C."/>
            <person name="Louesse C."/>
            <person name="Muselet D."/>
            <person name="Magdelenat G."/>
            <person name="Pateau E."/>
            <person name="Petit E."/>
            <person name="Sirvain-Trukniewicz P."/>
            <person name="Trybou A."/>
            <person name="Vega-Czarny N."/>
            <person name="Bataille E."/>
            <person name="Bluet E."/>
            <person name="Bordelais I."/>
            <person name="Dubois M."/>
            <person name="Dumont C."/>
            <person name="Guerin T."/>
            <person name="Haffray S."/>
            <person name="Hammadi R."/>
            <person name="Muanga J."/>
            <person name="Pellouin V."/>
            <person name="Robert D."/>
            <person name="Wunderle E."/>
            <person name="Gauguet G."/>
            <person name="Roy A."/>
            <person name="Sainte-Marthe L."/>
            <person name="Verdier J."/>
            <person name="Verdier-Discala C."/>
            <person name="Hillier L.W."/>
            <person name="Fulton L."/>
            <person name="McPherson J."/>
            <person name="Matsuda F."/>
            <person name="Wilson R."/>
            <person name="Scarpelli C."/>
            <person name="Gyapay G."/>
            <person name="Wincker P."/>
            <person name="Saurin W."/>
            <person name="Quetier F."/>
            <person name="Waterston R."/>
            <person name="Hood L."/>
            <person name="Weissenbach J."/>
        </authorList>
    </citation>
    <scope>NUCLEOTIDE SEQUENCE [LARGE SCALE GENOMIC DNA]</scope>
</reference>
<reference key="4">
    <citation type="submission" date="2005-07" db="EMBL/GenBank/DDBJ databases">
        <authorList>
            <person name="Mural R.J."/>
            <person name="Istrail S."/>
            <person name="Sutton G.G."/>
            <person name="Florea L."/>
            <person name="Halpern A.L."/>
            <person name="Mobarry C.M."/>
            <person name="Lippert R."/>
            <person name="Walenz B."/>
            <person name="Shatkay H."/>
            <person name="Dew I."/>
            <person name="Miller J.R."/>
            <person name="Flanigan M.J."/>
            <person name="Edwards N.J."/>
            <person name="Bolanos R."/>
            <person name="Fasulo D."/>
            <person name="Halldorsson B.V."/>
            <person name="Hannenhalli S."/>
            <person name="Turner R."/>
            <person name="Yooseph S."/>
            <person name="Lu F."/>
            <person name="Nusskern D.R."/>
            <person name="Shue B.C."/>
            <person name="Zheng X.H."/>
            <person name="Zhong F."/>
            <person name="Delcher A.L."/>
            <person name="Huson D.H."/>
            <person name="Kravitz S.A."/>
            <person name="Mouchard L."/>
            <person name="Reinert K."/>
            <person name="Remington K.A."/>
            <person name="Clark A.G."/>
            <person name="Waterman M.S."/>
            <person name="Eichler E.E."/>
            <person name="Adams M.D."/>
            <person name="Hunkapiller M.W."/>
            <person name="Myers E.W."/>
            <person name="Venter J.C."/>
        </authorList>
    </citation>
    <scope>NUCLEOTIDE SEQUENCE [LARGE SCALE GENOMIC DNA]</scope>
</reference>
<reference key="5">
    <citation type="journal article" date="2004" name="Genome Res.">
        <title>The status, quality, and expansion of the NIH full-length cDNA project: the Mammalian Gene Collection (MGC).</title>
        <authorList>
            <consortium name="The MGC Project Team"/>
        </authorList>
    </citation>
    <scope>NUCLEOTIDE SEQUENCE [LARGE SCALE MRNA] (ISOFORMS 2 AND 3)</scope>
    <source>
        <tissue>Eye</tissue>
    </source>
</reference>
<reference key="6">
    <citation type="journal article" date="2007" name="BMC Genomics">
        <title>The full-ORF clone resource of the German cDNA consortium.</title>
        <authorList>
            <person name="Bechtel S."/>
            <person name="Rosenfelder H."/>
            <person name="Duda A."/>
            <person name="Schmidt C.P."/>
            <person name="Ernst U."/>
            <person name="Wellenreuther R."/>
            <person name="Mehrle A."/>
            <person name="Schuster C."/>
            <person name="Bahr A."/>
            <person name="Bloecker H."/>
            <person name="Heubner D."/>
            <person name="Hoerlein A."/>
            <person name="Michel G."/>
            <person name="Wedler H."/>
            <person name="Koehrer K."/>
            <person name="Ottenwaelder B."/>
            <person name="Poustka A."/>
            <person name="Wiemann S."/>
            <person name="Schupp I."/>
        </authorList>
    </citation>
    <scope>NUCLEOTIDE SEQUENCE [LARGE SCALE MRNA] OF 215-594 (ISOFORM 1)</scope>
    <source>
        <tissue>Amygdala</tissue>
    </source>
</reference>
<reference key="7">
    <citation type="journal article" date="2008" name="Proc. Natl. Acad. Sci. U.S.A.">
        <title>A quantitative atlas of mitotic phosphorylation.</title>
        <authorList>
            <person name="Dephoure N."/>
            <person name="Zhou C."/>
            <person name="Villen J."/>
            <person name="Beausoleil S.A."/>
            <person name="Bakalarski C.E."/>
            <person name="Elledge S.J."/>
            <person name="Gygi S.P."/>
        </authorList>
    </citation>
    <scope>PHOSPHORYLATION [LARGE SCALE ANALYSIS] AT SER-513</scope>
    <scope>IDENTIFICATION BY MASS SPECTROMETRY [LARGE SCALE ANALYSIS]</scope>
    <source>
        <tissue>Cervix carcinoma</tissue>
    </source>
</reference>
<reference key="8">
    <citation type="journal article" date="2011" name="BMC Syst. Biol.">
        <title>Initial characterization of the human central proteome.</title>
        <authorList>
            <person name="Burkard T.R."/>
            <person name="Planyavsky M."/>
            <person name="Kaupe I."/>
            <person name="Breitwieser F.P."/>
            <person name="Buerckstuemmer T."/>
            <person name="Bennett K.L."/>
            <person name="Superti-Furga G."/>
            <person name="Colinge J."/>
        </authorList>
    </citation>
    <scope>IDENTIFICATION BY MASS SPECTROMETRY [LARGE SCALE ANALYSIS]</scope>
</reference>
<reference key="9">
    <citation type="journal article" date="2013" name="J. Proteome Res.">
        <title>Toward a comprehensive characterization of a human cancer cell phosphoproteome.</title>
        <authorList>
            <person name="Zhou H."/>
            <person name="Di Palma S."/>
            <person name="Preisinger C."/>
            <person name="Peng M."/>
            <person name="Polat A.N."/>
            <person name="Heck A.J."/>
            <person name="Mohammed S."/>
        </authorList>
    </citation>
    <scope>PHOSPHORYLATION [LARGE SCALE ANALYSIS] AT SER-513</scope>
    <scope>IDENTIFICATION BY MASS SPECTROMETRY [LARGE SCALE ANALYSIS]</scope>
    <source>
        <tissue>Cervix carcinoma</tissue>
    </source>
</reference>
<reference key="10">
    <citation type="journal article" date="2017" name="J. Biol. Chem.">
        <title>Cell cycle-dependent degradation of the methyltransferase SETD3 attenuates cell proliferation and liver tumorigenesis.</title>
        <authorList>
            <person name="Cheng X."/>
            <person name="Hao Y."/>
            <person name="Shu W."/>
            <person name="Zhao M."/>
            <person name="Zhao C."/>
            <person name="Wu Y."/>
            <person name="Peng X."/>
            <person name="Yao P."/>
            <person name="Xiao D."/>
            <person name="Qing G."/>
            <person name="Pan Z."/>
            <person name="Yin L."/>
            <person name="Hu D."/>
            <person name="Du H.N."/>
        </authorList>
    </citation>
    <scope>SUBCELLULAR LOCATION</scope>
    <scope>DEVELOPMENTAL STAGE</scope>
    <scope>UBIQUITINATION</scope>
    <scope>PHOSPHORYLATION</scope>
    <scope>MUTAGENESIS OF 37-SER--GLY-42; 181-SER--THR-185; 260-THR--SER-264; 373-THR--SER-378; 512-SER--SER-517 AND 565-SER--SER-569</scope>
</reference>
<reference key="11">
    <citation type="journal article" date="2018" name="Elife">
        <title>SETD3 protein is the actin-specific histidine N-methyltransferase.</title>
        <authorList>
            <person name="Kwiatkowski S."/>
            <person name="Seliga A.K."/>
            <person name="Vertommen D."/>
            <person name="Terreri M."/>
            <person name="Ishikawa T."/>
            <person name="Grabowska I."/>
            <person name="Tiebe M."/>
            <person name="Teleman A.A."/>
            <person name="Jagielski A.K."/>
            <person name="Veiga-da-Cunha M."/>
            <person name="Drozak J."/>
        </authorList>
    </citation>
    <scope>FUNCTION</scope>
    <scope>CATALYTIC ACTIVITY</scope>
    <scope>BIOPHYSICOCHEMICAL PROPERTIES</scope>
</reference>
<reference evidence="21" key="12">
    <citation type="submission" date="2011-06" db="PDB data bank">
        <title>Crystal structure of human SET domain-containing protein 3.</title>
        <authorList>
            <person name="Zeng H."/>
            <person name="Dong A."/>
            <person name="Walker J.R."/>
            <person name="Loppnau P."/>
            <person name="Bountra C."/>
            <person name="Weigelt J."/>
            <person name="Arrowsmith C.H."/>
            <person name="Edwards A.M."/>
            <person name="Min J."/>
            <person name="Wu H."/>
        </authorList>
    </citation>
    <scope>X-RAY CRYSTALLOGRAPHY (2.04 ANGSTROMS) OF 2-498 IN COMPLEX WITH S-ADENOSYL-L-METHIONINE</scope>
</reference>
<reference key="13">
    <citation type="journal article" date="2019" name="Elife">
        <title>Structural insights into SETD3-mediated histidine methylation on beta-actin.</title>
        <authorList>
            <person name="Guo Q."/>
            <person name="Liao S."/>
            <person name="Kwiatkowski S."/>
            <person name="Tomaka W."/>
            <person name="Yu H."/>
            <person name="Wu G."/>
            <person name="Tu X."/>
            <person name="Min J."/>
            <person name="Drozak J."/>
            <person name="Xu C."/>
        </authorList>
    </citation>
    <scope>X-RAY CRYSTALLOGRAPHY (1.95 ANGSTROMS) OF 1-503 IN COMPLEX WITH ACTIN AND S-ADENOSYL-L-METHIONINE</scope>
    <scope>FUNCTION</scope>
    <scope>CATALYTIC ACTIVITY</scope>
    <scope>BIOPHYSICOCHEMICAL PROPERTIES</scope>
    <scope>MUTAGENESIS OF ARG-215; ASN-256; TYR-313 AND ARG-316</scope>
</reference>
<reference key="14">
    <citation type="journal article" date="2019" name="Nature">
        <title>SETD3 is an actin histidine methyltransferase that prevents primary dystocia.</title>
        <authorList>
            <person name="Wilkinson A.W."/>
            <person name="Diep J."/>
            <person name="Dai S."/>
            <person name="Liu S."/>
            <person name="Ooi Y.S."/>
            <person name="Song D."/>
            <person name="Li T.M."/>
            <person name="Horton J.R."/>
            <person name="Zhang X."/>
            <person name="Liu C."/>
            <person name="Trivedi D.V."/>
            <person name="Ruppel K.M."/>
            <person name="Vilches-Moure J.G."/>
            <person name="Casey K.M."/>
            <person name="Mak J."/>
            <person name="Cowan T."/>
            <person name="Elias J.E."/>
            <person name="Nagamine C.M."/>
            <person name="Spudich J.A."/>
            <person name="Cheng X."/>
            <person name="Carette J.E."/>
            <person name="Gozani O."/>
        </authorList>
    </citation>
    <scope>X-RAY CRYSTALLOGRAPHY (1.69 ANGSTROMS) OF 21-503 IN COMPLEX WITH ACTIN AND S-ADENOSYL-L-METHIONINE</scope>
    <scope>FUNCTION</scope>
    <scope>CATALYTIC ACTIVITY</scope>
    <scope>SUBCELLULAR LOCATION</scope>
    <scope>DOMAIN</scope>
    <scope>MUTAGENESIS OF TYR-313</scope>
</reference>
<reference evidence="28 29 30 31 32 33" key="15">
    <citation type="journal article" date="2019" name="Nat. Commun.">
        <title>Structural basis for the target specificity of actin histidine methyltransferase SETD3.</title>
        <authorList>
            <person name="Dai S."/>
            <person name="Horton J.R."/>
            <person name="Woodcock C.B."/>
            <person name="Wilkinson A.W."/>
            <person name="Zhang X."/>
            <person name="Gozani O."/>
            <person name="Cheng X."/>
        </authorList>
    </citation>
    <scope>X-RAY CRYSTALLOGRAPHY (1.75 ANGSTROMS) IN COMPLEX WITH ACTIN AND S-ADENOSYL-L-METHIONINE</scope>
    <scope>FUNCTION</scope>
    <scope>CATALYTIC ACTIVITY</scope>
    <scope>MUTAGENESIS OF ASN-256</scope>
</reference>
<reference evidence="24" key="16">
    <citation type="journal article" date="2020" name="Cell Discov.">
        <title>Molecular basis for histidine N3-specific methylation of actin H73 by SETD3.</title>
        <authorList>
            <person name="Zheng Y."/>
            <person name="Zhang X."/>
            <person name="Li H."/>
        </authorList>
    </citation>
    <scope>X-RAY CRYSTALLOGRAPHY (2.71 ANGSTROMS) OF 1-498 IN COMPLEX WITH ACTIN AND S-ADENOSYL-L-METHIONINE ANALOG</scope>
    <scope>FUNCTION</scope>
    <scope>CATALYTIC ACTIVITY</scope>
</reference>
<reference evidence="34 35" key="17">
    <citation type="journal article" date="2020" name="J. Biol. Chem.">
        <title>An engineered variant of SETD3 methyltransferase alters target specificity from histidine to lysine methylation.</title>
        <authorList>
            <person name="Dai S."/>
            <person name="Horton J.R."/>
            <person name="Wilkinson A.W."/>
            <person name="Gozani O."/>
            <person name="Zhang X."/>
            <person name="Cheng X."/>
        </authorList>
    </citation>
    <scope>X-RAY CRYSTALLOGRAPHY (2.02 ANGSTROMS) IN COMPLEX WITH ACTIN MUTANT AND S-ADENOSYL-L-METHIONINE</scope>
    <scope>MUTAGENESIS OF ASN-256 AND TRP-274</scope>
</reference>
<reference evidence="36 37" key="18">
    <citation type="journal article" date="2020" name="J. Biol. Chem.">
        <title>Characterization of SETD3 methyltransferase-mediated protein methionine methylation.</title>
        <authorList>
            <person name="Dai S."/>
            <person name="Holt M.V."/>
            <person name="Horton J.R."/>
            <person name="Woodcock C.B."/>
            <person name="Patel A."/>
            <person name="Zhang X."/>
            <person name="Young N.L."/>
            <person name="Wilkinson A.W."/>
            <person name="Cheng X."/>
        </authorList>
    </citation>
    <scope>X-RAY CRYSTALLOGRAPHY (1.76 ANGSTROMS) IN COMPLEX WITH ACTIN MUTANT AND S-ADENOSYL-L-METHIONINE</scope>
    <scope>MUTAGENESIS OF ASN-256</scope>
</reference>
<proteinExistence type="evidence at protein level"/>